<sequence length="575" mass="62850">MKKIKLEKPTSGSQLVLQTLKELGVEIIFGYPGGAMLPLYDAIHNFEGIQHILARHEQGATHEAEGYAKSSGKVGVVVVTSGPGATNAVTGIADAYLDSVPLLVFTGQVGPLSIGKDAFQEADTVGITAPITKYNYQIRETADIPRIVTEAYYLARTGRPGPVEIDLPKDVSTLEVTEINDPSLNLPHYHESEKATDEQLQELLTELSVSKKPVIIAGGGINYSGSVDIFRAFVEKYQIPVVSTLLGLGTLPISHELQLGMAGMHGSYAANMALVEADYIINLGSRFDDRVVSNPAKVAKNAVVAHIDIDAAELGKIVKTDIPILSDLKAALSRLLQLNKVRTDFNDWIKTVTKNKEKAPFTYEPQNHDIRPQETIKLIGEYTQGDAIIVTDVGQHQMWVAQYYPYKNARQLITSGGMGTMGFGIPAAIGAKLAQPNKNVIVFVGDGGFQMTNQELALLNGYGIAIKVVLINNHSLGMVRQWQESFYEERRSQSVFDVEPNFQLLAEAYGIKHVKLDNPKTLADDLKIITEDEPMLIEVLISKSEHVLPMIPAGLHSDEMIGLHFTDENEEVDNA</sequence>
<protein>
    <recommendedName>
        <fullName>Acetolactate synthase large subunit</fullName>
        <shortName>AHAS</shortName>
        <ecNumber>2.2.1.6</ecNumber>
    </recommendedName>
    <alternativeName>
        <fullName>Acetohydroxy-acid synthase large subunit</fullName>
        <shortName>ALS</shortName>
    </alternativeName>
</protein>
<name>ILVB_LACLA</name>
<gene>
    <name type="primary">ilvB</name>
    <name type="ordered locus">LL1224</name>
    <name type="ORF">L0078</name>
</gene>
<comment type="catalytic activity">
    <reaction>
        <text>2 pyruvate + H(+) = (2S)-2-acetolactate + CO2</text>
        <dbReference type="Rhea" id="RHEA:25249"/>
        <dbReference type="ChEBI" id="CHEBI:15361"/>
        <dbReference type="ChEBI" id="CHEBI:15378"/>
        <dbReference type="ChEBI" id="CHEBI:16526"/>
        <dbReference type="ChEBI" id="CHEBI:58476"/>
        <dbReference type="EC" id="2.2.1.6"/>
    </reaction>
</comment>
<comment type="cofactor">
    <cofactor evidence="1">
        <name>Mg(2+)</name>
        <dbReference type="ChEBI" id="CHEBI:18420"/>
    </cofactor>
    <text evidence="1">Binds 1 Mg(2+) ion per subunit.</text>
</comment>
<comment type="cofactor">
    <cofactor evidence="1">
        <name>thiamine diphosphate</name>
        <dbReference type="ChEBI" id="CHEBI:58937"/>
    </cofactor>
    <text evidence="1">Binds 1 thiamine pyrophosphate per subunit.</text>
</comment>
<comment type="pathway">
    <text>Amino-acid biosynthesis; L-isoleucine biosynthesis; L-isoleucine from 2-oxobutanoate: step 1/4.</text>
</comment>
<comment type="pathway">
    <text>Amino-acid biosynthesis; L-valine biosynthesis; L-valine from pyruvate: step 1/4.</text>
</comment>
<comment type="subunit">
    <text>Dimer of large and small chains.</text>
</comment>
<comment type="miscellaneous">
    <text evidence="1">Contains 1 molecule of FAD per monomer. The role of this cofactor is not clear considering that the reaction does not involve redox chemistry (By similarity).</text>
</comment>
<comment type="similarity">
    <text evidence="2">Belongs to the TPP enzyme family.</text>
</comment>
<comment type="sequence caution" evidence="2">
    <conflict type="erroneous termination">
        <sequence resource="EMBL-CDS" id="AAK05322"/>
    </conflict>
    <text>Truncated C-terminus.</text>
</comment>
<reference key="1">
    <citation type="journal article" date="1992" name="J. Bacteriol.">
        <title>Branched-chain amino acid biosynthesis genes in Lactococcus lactis subsp. lactis.</title>
        <authorList>
            <person name="Godon J.-J."/>
            <person name="Chopin M.-C."/>
            <person name="Ehrlich S.D."/>
        </authorList>
    </citation>
    <scope>NUCLEOTIDE SEQUENCE [GENOMIC DNA]</scope>
    <source>
        <strain>NCDO 2118</strain>
    </source>
</reference>
<reference key="2">
    <citation type="journal article" date="2001" name="Genome Res.">
        <title>The complete genome sequence of the lactic acid bacterium Lactococcus lactis ssp. lactis IL1403.</title>
        <authorList>
            <person name="Bolotin A."/>
            <person name="Wincker P."/>
            <person name="Mauger S."/>
            <person name="Jaillon O."/>
            <person name="Malarme K."/>
            <person name="Weissenbach J."/>
            <person name="Ehrlich S.D."/>
            <person name="Sorokin A."/>
        </authorList>
    </citation>
    <scope>NUCLEOTIDE SEQUENCE [LARGE SCALE GENOMIC DNA]</scope>
    <source>
        <strain>IL1403</strain>
    </source>
</reference>
<evidence type="ECO:0000250" key="1"/>
<evidence type="ECO:0000305" key="2"/>
<organism>
    <name type="scientific">Lactococcus lactis subsp. lactis (strain IL1403)</name>
    <name type="common">Streptococcus lactis</name>
    <dbReference type="NCBI Taxonomy" id="272623"/>
    <lineage>
        <taxon>Bacteria</taxon>
        <taxon>Bacillati</taxon>
        <taxon>Bacillota</taxon>
        <taxon>Bacilli</taxon>
        <taxon>Lactobacillales</taxon>
        <taxon>Streptococcaceae</taxon>
        <taxon>Lactococcus</taxon>
    </lineage>
</organism>
<proteinExistence type="inferred from homology"/>
<keyword id="KW-0028">Amino-acid biosynthesis</keyword>
<keyword id="KW-0100">Branched-chain amino acid biosynthesis</keyword>
<keyword id="KW-0274">FAD</keyword>
<keyword id="KW-0285">Flavoprotein</keyword>
<keyword id="KW-0460">Magnesium</keyword>
<keyword id="KW-0479">Metal-binding</keyword>
<keyword id="KW-1185">Reference proteome</keyword>
<keyword id="KW-0786">Thiamine pyrophosphate</keyword>
<keyword id="KW-0808">Transferase</keyword>
<dbReference type="EC" id="2.2.1.6"/>
<dbReference type="EMBL" id="U92974">
    <property type="protein sequence ID" value="AAB81919.1"/>
    <property type="molecule type" value="Genomic_DNA"/>
</dbReference>
<dbReference type="EMBL" id="AE005176">
    <property type="protein sequence ID" value="AAK05322.1"/>
    <property type="status" value="ALT_SEQ"/>
    <property type="molecule type" value="Genomic_DNA"/>
</dbReference>
<dbReference type="PIR" id="H86777">
    <property type="entry name" value="H86777"/>
</dbReference>
<dbReference type="PIR" id="S35138">
    <property type="entry name" value="S35138"/>
</dbReference>
<dbReference type="RefSeq" id="NP_267380.1">
    <property type="nucleotide sequence ID" value="NC_002662.1"/>
</dbReference>
<dbReference type="SMR" id="Q02137"/>
<dbReference type="PaxDb" id="272623-L0078"/>
<dbReference type="EnsemblBacteria" id="AAK05322">
    <property type="protein sequence ID" value="AAK05322"/>
    <property type="gene ID" value="L0078"/>
</dbReference>
<dbReference type="KEGG" id="lla:L0078"/>
<dbReference type="PATRIC" id="fig|272623.7.peg.1323"/>
<dbReference type="eggNOG" id="COG0028">
    <property type="taxonomic scope" value="Bacteria"/>
</dbReference>
<dbReference type="HOGENOM" id="CLU_013748_1_2_9"/>
<dbReference type="OrthoDB" id="4494979at2"/>
<dbReference type="UniPathway" id="UPA00047">
    <property type="reaction ID" value="UER00055"/>
</dbReference>
<dbReference type="UniPathway" id="UPA00049">
    <property type="reaction ID" value="UER00059"/>
</dbReference>
<dbReference type="Proteomes" id="UP000002196">
    <property type="component" value="Chromosome"/>
</dbReference>
<dbReference type="GO" id="GO:0005948">
    <property type="term" value="C:acetolactate synthase complex"/>
    <property type="evidence" value="ECO:0007669"/>
    <property type="project" value="TreeGrafter"/>
</dbReference>
<dbReference type="GO" id="GO:0003984">
    <property type="term" value="F:acetolactate synthase activity"/>
    <property type="evidence" value="ECO:0007669"/>
    <property type="project" value="UniProtKB-EC"/>
</dbReference>
<dbReference type="GO" id="GO:0050660">
    <property type="term" value="F:flavin adenine dinucleotide binding"/>
    <property type="evidence" value="ECO:0007669"/>
    <property type="project" value="InterPro"/>
</dbReference>
<dbReference type="GO" id="GO:0000287">
    <property type="term" value="F:magnesium ion binding"/>
    <property type="evidence" value="ECO:0007669"/>
    <property type="project" value="InterPro"/>
</dbReference>
<dbReference type="GO" id="GO:0030976">
    <property type="term" value="F:thiamine pyrophosphate binding"/>
    <property type="evidence" value="ECO:0007669"/>
    <property type="project" value="InterPro"/>
</dbReference>
<dbReference type="GO" id="GO:0009097">
    <property type="term" value="P:isoleucine biosynthetic process"/>
    <property type="evidence" value="ECO:0007669"/>
    <property type="project" value="UniProtKB-UniPathway"/>
</dbReference>
<dbReference type="GO" id="GO:0009099">
    <property type="term" value="P:L-valine biosynthetic process"/>
    <property type="evidence" value="ECO:0007669"/>
    <property type="project" value="UniProtKB-UniPathway"/>
</dbReference>
<dbReference type="CDD" id="cd02015">
    <property type="entry name" value="TPP_AHAS"/>
    <property type="match status" value="1"/>
</dbReference>
<dbReference type="CDD" id="cd07035">
    <property type="entry name" value="TPP_PYR_POX_like"/>
    <property type="match status" value="1"/>
</dbReference>
<dbReference type="FunFam" id="3.40.50.1220:FF:000008">
    <property type="entry name" value="Acetolactate synthase"/>
    <property type="match status" value="1"/>
</dbReference>
<dbReference type="FunFam" id="3.40.50.970:FF:000007">
    <property type="entry name" value="Acetolactate synthase"/>
    <property type="match status" value="1"/>
</dbReference>
<dbReference type="FunFam" id="3.40.50.970:FF:000016">
    <property type="entry name" value="Acetolactate synthase"/>
    <property type="match status" value="1"/>
</dbReference>
<dbReference type="Gene3D" id="3.40.50.970">
    <property type="match status" value="2"/>
</dbReference>
<dbReference type="Gene3D" id="3.40.50.1220">
    <property type="entry name" value="TPP-binding domain"/>
    <property type="match status" value="1"/>
</dbReference>
<dbReference type="InterPro" id="IPR012846">
    <property type="entry name" value="Acetolactate_synth_lsu"/>
</dbReference>
<dbReference type="InterPro" id="IPR039368">
    <property type="entry name" value="AHAS_TPP"/>
</dbReference>
<dbReference type="InterPro" id="IPR029035">
    <property type="entry name" value="DHS-like_NAD/FAD-binding_dom"/>
</dbReference>
<dbReference type="InterPro" id="IPR029061">
    <property type="entry name" value="THDP-binding"/>
</dbReference>
<dbReference type="InterPro" id="IPR012000">
    <property type="entry name" value="Thiamin_PyroP_enz_cen_dom"/>
</dbReference>
<dbReference type="InterPro" id="IPR012001">
    <property type="entry name" value="Thiamin_PyroP_enz_TPP-bd_dom"/>
</dbReference>
<dbReference type="InterPro" id="IPR000399">
    <property type="entry name" value="TPP-bd_CS"/>
</dbReference>
<dbReference type="InterPro" id="IPR045229">
    <property type="entry name" value="TPP_enz"/>
</dbReference>
<dbReference type="InterPro" id="IPR011766">
    <property type="entry name" value="TPP_enzyme_TPP-bd"/>
</dbReference>
<dbReference type="NCBIfam" id="TIGR00118">
    <property type="entry name" value="acolac_lg"/>
    <property type="match status" value="1"/>
</dbReference>
<dbReference type="NCBIfam" id="NF005584">
    <property type="entry name" value="PRK07282.1"/>
    <property type="match status" value="1"/>
</dbReference>
<dbReference type="PANTHER" id="PTHR18968:SF13">
    <property type="entry name" value="ACETOLACTATE SYNTHASE CATALYTIC SUBUNIT, MITOCHONDRIAL"/>
    <property type="match status" value="1"/>
</dbReference>
<dbReference type="PANTHER" id="PTHR18968">
    <property type="entry name" value="THIAMINE PYROPHOSPHATE ENZYMES"/>
    <property type="match status" value="1"/>
</dbReference>
<dbReference type="Pfam" id="PF02775">
    <property type="entry name" value="TPP_enzyme_C"/>
    <property type="match status" value="1"/>
</dbReference>
<dbReference type="Pfam" id="PF00205">
    <property type="entry name" value="TPP_enzyme_M"/>
    <property type="match status" value="1"/>
</dbReference>
<dbReference type="Pfam" id="PF02776">
    <property type="entry name" value="TPP_enzyme_N"/>
    <property type="match status" value="1"/>
</dbReference>
<dbReference type="SUPFAM" id="SSF52467">
    <property type="entry name" value="DHS-like NAD/FAD-binding domain"/>
    <property type="match status" value="1"/>
</dbReference>
<dbReference type="SUPFAM" id="SSF52518">
    <property type="entry name" value="Thiamin diphosphate-binding fold (THDP-binding)"/>
    <property type="match status" value="2"/>
</dbReference>
<dbReference type="PROSITE" id="PS00187">
    <property type="entry name" value="TPP_ENZYMES"/>
    <property type="match status" value="1"/>
</dbReference>
<feature type="chain" id="PRO_0000090785" description="Acetolactate synthase large subunit">
    <location>
        <begin position="1"/>
        <end position="575"/>
    </location>
</feature>
<feature type="region of interest" description="Thiamine pyrophosphate binding">
    <location>
        <begin position="395"/>
        <end position="475"/>
    </location>
</feature>
<feature type="binding site" evidence="1">
    <location>
        <position position="57"/>
    </location>
    <ligand>
        <name>thiamine diphosphate</name>
        <dbReference type="ChEBI" id="CHEBI:58937"/>
    </ligand>
</feature>
<feature type="binding site" evidence="1">
    <location>
        <position position="159"/>
    </location>
    <ligand>
        <name>FAD</name>
        <dbReference type="ChEBI" id="CHEBI:57692"/>
    </ligand>
</feature>
<feature type="binding site" evidence="1">
    <location>
        <begin position="265"/>
        <end position="286"/>
    </location>
    <ligand>
        <name>FAD</name>
        <dbReference type="ChEBI" id="CHEBI:57692"/>
    </ligand>
</feature>
<feature type="binding site" evidence="1">
    <location>
        <begin position="308"/>
        <end position="327"/>
    </location>
    <ligand>
        <name>FAD</name>
        <dbReference type="ChEBI" id="CHEBI:57692"/>
    </ligand>
</feature>
<feature type="binding site" evidence="1">
    <location>
        <position position="446"/>
    </location>
    <ligand>
        <name>Mg(2+)</name>
        <dbReference type="ChEBI" id="CHEBI:18420"/>
    </ligand>
</feature>
<feature type="binding site" evidence="1">
    <location>
        <position position="473"/>
    </location>
    <ligand>
        <name>Mg(2+)</name>
        <dbReference type="ChEBI" id="CHEBI:18420"/>
    </ligand>
</feature>
<feature type="sequence conflict" description="In Ref. 1; AAB81919." evidence="2" ref="1">
    <original>PL</original>
    <variation>RQ</variation>
    <location>
        <begin position="111"/>
        <end position="112"/>
    </location>
</feature>
<feature type="sequence conflict" description="In Ref. 1; AAB81919." evidence="2" ref="1">
    <original>V</original>
    <variation>F</variation>
    <location>
        <position position="298"/>
    </location>
</feature>
<feature type="sequence conflict" description="In Ref. 1; AAB81919." evidence="2" ref="1">
    <original>TK</original>
    <variation>IE</variation>
    <location>
        <begin position="353"/>
        <end position="354"/>
    </location>
</feature>
<feature type="sequence conflict" description="In Ref. 1; AAB81919." evidence="2" ref="1">
    <original>S</original>
    <variation>N</variation>
    <location>
        <position position="557"/>
    </location>
</feature>
<feature type="sequence conflict" description="In Ref. 1; AAB81919." evidence="2" ref="1">
    <original>E</original>
    <variation>K</variation>
    <location>
        <position position="568"/>
    </location>
</feature>
<feature type="sequence conflict" description="In Ref. 1; AAB81919." evidence="2" ref="1">
    <original>V</original>
    <variation>I</variation>
    <location>
        <position position="572"/>
    </location>
</feature>
<accession>Q02137</accession>
<accession>Q9CG84</accession>